<proteinExistence type="inferred from homology"/>
<name>H2A4_ORYSI</name>
<organism>
    <name type="scientific">Oryza sativa subsp. indica</name>
    <name type="common">Rice</name>
    <dbReference type="NCBI Taxonomy" id="39946"/>
    <lineage>
        <taxon>Eukaryota</taxon>
        <taxon>Viridiplantae</taxon>
        <taxon>Streptophyta</taxon>
        <taxon>Embryophyta</taxon>
        <taxon>Tracheophyta</taxon>
        <taxon>Spermatophyta</taxon>
        <taxon>Magnoliopsida</taxon>
        <taxon>Liliopsida</taxon>
        <taxon>Poales</taxon>
        <taxon>Poaceae</taxon>
        <taxon>BOP clade</taxon>
        <taxon>Oryzoideae</taxon>
        <taxon>Oryzeae</taxon>
        <taxon>Oryzinae</taxon>
        <taxon>Oryza</taxon>
        <taxon>Oryza sativa</taxon>
    </lineage>
</organism>
<sequence length="163" mass="16971">MEVGAKVPKKAGAGGRRGGGGPKKKPVSRSVKAGLQFPVGRIGRYLKQGRYSQRIGTGAPVYLAAVLEYLAAEVLELAGNAARDNKKNRIIPRHVLLAIRNDEELGKLLAGVTIAHGGVLPNINPVLLPKKTGSAAAKEAKEGKTPKSPKKATTKSPKKAAAA</sequence>
<evidence type="ECO:0000250" key="1"/>
<evidence type="ECO:0000256" key="2">
    <source>
        <dbReference type="SAM" id="MobiDB-lite"/>
    </source>
</evidence>
<evidence type="ECO:0000305" key="3"/>
<comment type="function">
    <text>Core component of nucleosome. Nucleosomes wrap and compact DNA into chromatin, limiting DNA accessibility to the cellular machineries which require DNA as a template. Histones thereby play a central role in transcription regulation, DNA repair, DNA replication and chromosomal stability. DNA accessibility is regulated via a complex set of post-translational modifications of histones, also called histone code, and nucleosome remodeling.</text>
</comment>
<comment type="subunit">
    <text>The nucleosome is a histone octamer containing two molecules each of H2A, H2B, H3 and H4 assembled in one H3-H4 heterotetramer and two H2A-H2B heterodimers. The octamer wraps approximately 147 bp of DNA.</text>
</comment>
<comment type="subcellular location">
    <subcellularLocation>
        <location evidence="1">Nucleus</location>
    </subcellularLocation>
    <subcellularLocation>
        <location evidence="1">Chromosome</location>
    </subcellularLocation>
</comment>
<comment type="domain">
    <text>Contains 2 SPKK motifs which may interact with the minor groove of A/T-rich DNA sites. Phosphorylation of this motif may regulate DNA binding. This motif is reiterated in both termini of histone H1 and in the N-terminus of sea urchin histones H2B, but its presence in the C-terminus seems to be unique to plant H2A.</text>
</comment>
<comment type="similarity">
    <text evidence="3">Belongs to the histone H2A family.</text>
</comment>
<dbReference type="EMBL" id="CM000130">
    <property type="protein sequence ID" value="EAY98328.1"/>
    <property type="molecule type" value="Genomic_DNA"/>
</dbReference>
<dbReference type="SMR" id="A2Y5G8"/>
<dbReference type="STRING" id="39946.A2Y5G8"/>
<dbReference type="EnsemblPlants" id="BGIOSGA017910-TA">
    <property type="protein sequence ID" value="BGIOSGA017910-PA"/>
    <property type="gene ID" value="BGIOSGA017910"/>
</dbReference>
<dbReference type="EnsemblPlants" id="OsGoSa_05g0019770.01">
    <property type="protein sequence ID" value="OsGoSa_05g0019770.01"/>
    <property type="gene ID" value="OsGoSa_05g0019770"/>
</dbReference>
<dbReference type="EnsemblPlants" id="OsIR64_05g0019480.01">
    <property type="protein sequence ID" value="OsIR64_05g0019480.01"/>
    <property type="gene ID" value="OsIR64_05g0019480"/>
</dbReference>
<dbReference type="EnsemblPlants" id="OsKYG_05g0019700.01">
    <property type="protein sequence ID" value="OsKYG_05g0019700.01"/>
    <property type="gene ID" value="OsKYG_05g0019700"/>
</dbReference>
<dbReference type="EnsemblPlants" id="OsLaMu_05g0019870.01">
    <property type="protein sequence ID" value="OsLaMu_05g0019870.01"/>
    <property type="gene ID" value="OsLaMu_05g0019870"/>
</dbReference>
<dbReference type="EnsemblPlants" id="OsLima_05g0019720.01">
    <property type="protein sequence ID" value="OsLima_05g0019720.01"/>
    <property type="gene ID" value="OsLima_05g0019720"/>
</dbReference>
<dbReference type="EnsemblPlants" id="OsLiXu_05g0019860.01">
    <property type="protein sequence ID" value="OsLiXu_05g0019860.01"/>
    <property type="gene ID" value="OsLiXu_05g0019860"/>
</dbReference>
<dbReference type="EnsemblPlants" id="OsMH63_05G019890_01">
    <property type="protein sequence ID" value="OsMH63_05G019890_01"/>
    <property type="gene ID" value="OsMH63_05G019890"/>
</dbReference>
<dbReference type="EnsemblPlants" id="OsPr106_05g0019890.01">
    <property type="protein sequence ID" value="OsPr106_05g0019890.01"/>
    <property type="gene ID" value="OsPr106_05g0019890"/>
</dbReference>
<dbReference type="EnsemblPlants" id="OsZS97_05G020080_01">
    <property type="protein sequence ID" value="OsZS97_05G020080_01"/>
    <property type="gene ID" value="OsZS97_05G020080"/>
</dbReference>
<dbReference type="Gramene" id="BGIOSGA017910-TA">
    <property type="protein sequence ID" value="BGIOSGA017910-PA"/>
    <property type="gene ID" value="BGIOSGA017910"/>
</dbReference>
<dbReference type="Gramene" id="OsGoSa_05g0019770.01">
    <property type="protein sequence ID" value="OsGoSa_05g0019770.01"/>
    <property type="gene ID" value="OsGoSa_05g0019770"/>
</dbReference>
<dbReference type="Gramene" id="OsIR64_05g0019480.01">
    <property type="protein sequence ID" value="OsIR64_05g0019480.01"/>
    <property type="gene ID" value="OsIR64_05g0019480"/>
</dbReference>
<dbReference type="Gramene" id="OsKYG_05g0019700.01">
    <property type="protein sequence ID" value="OsKYG_05g0019700.01"/>
    <property type="gene ID" value="OsKYG_05g0019700"/>
</dbReference>
<dbReference type="Gramene" id="OsLaMu_05g0019870.01">
    <property type="protein sequence ID" value="OsLaMu_05g0019870.01"/>
    <property type="gene ID" value="OsLaMu_05g0019870"/>
</dbReference>
<dbReference type="Gramene" id="OsLima_05g0019720.01">
    <property type="protein sequence ID" value="OsLima_05g0019720.01"/>
    <property type="gene ID" value="OsLima_05g0019720"/>
</dbReference>
<dbReference type="Gramene" id="OsLiXu_05g0019860.01">
    <property type="protein sequence ID" value="OsLiXu_05g0019860.01"/>
    <property type="gene ID" value="OsLiXu_05g0019860"/>
</dbReference>
<dbReference type="Gramene" id="OsMH63_05G019890_01">
    <property type="protein sequence ID" value="OsMH63_05G019890_01"/>
    <property type="gene ID" value="OsMH63_05G019890"/>
</dbReference>
<dbReference type="Gramene" id="OsPr106_05g0019890.01">
    <property type="protein sequence ID" value="OsPr106_05g0019890.01"/>
    <property type="gene ID" value="OsPr106_05g0019890"/>
</dbReference>
<dbReference type="Gramene" id="OsZS97_05G020080_01">
    <property type="protein sequence ID" value="OsZS97_05G020080_01"/>
    <property type="gene ID" value="OsZS97_05G020080"/>
</dbReference>
<dbReference type="HOGENOM" id="CLU_062828_1_1_1"/>
<dbReference type="OMA" id="WRRHEGR"/>
<dbReference type="OrthoDB" id="10253031at2759"/>
<dbReference type="Proteomes" id="UP000007015">
    <property type="component" value="Chromosome 5"/>
</dbReference>
<dbReference type="GO" id="GO:0000786">
    <property type="term" value="C:nucleosome"/>
    <property type="evidence" value="ECO:0007669"/>
    <property type="project" value="UniProtKB-KW"/>
</dbReference>
<dbReference type="GO" id="GO:0005634">
    <property type="term" value="C:nucleus"/>
    <property type="evidence" value="ECO:0007669"/>
    <property type="project" value="UniProtKB-SubCell"/>
</dbReference>
<dbReference type="GO" id="GO:0003677">
    <property type="term" value="F:DNA binding"/>
    <property type="evidence" value="ECO:0007669"/>
    <property type="project" value="UniProtKB-KW"/>
</dbReference>
<dbReference type="GO" id="GO:0046982">
    <property type="term" value="F:protein heterodimerization activity"/>
    <property type="evidence" value="ECO:0007669"/>
    <property type="project" value="InterPro"/>
</dbReference>
<dbReference type="GO" id="GO:0030527">
    <property type="term" value="F:structural constituent of chromatin"/>
    <property type="evidence" value="ECO:0007669"/>
    <property type="project" value="InterPro"/>
</dbReference>
<dbReference type="CDD" id="cd00074">
    <property type="entry name" value="HFD_H2A"/>
    <property type="match status" value="1"/>
</dbReference>
<dbReference type="FunFam" id="1.10.20.10:FF:000026">
    <property type="entry name" value="Histone H2A"/>
    <property type="match status" value="1"/>
</dbReference>
<dbReference type="Gene3D" id="1.10.20.10">
    <property type="entry name" value="Histone, subunit A"/>
    <property type="match status" value="1"/>
</dbReference>
<dbReference type="InterPro" id="IPR009072">
    <property type="entry name" value="Histone-fold"/>
</dbReference>
<dbReference type="InterPro" id="IPR002119">
    <property type="entry name" value="Histone_H2A"/>
</dbReference>
<dbReference type="InterPro" id="IPR007125">
    <property type="entry name" value="Histone_H2A/H2B/H3"/>
</dbReference>
<dbReference type="InterPro" id="IPR032454">
    <property type="entry name" value="Histone_H2A_C"/>
</dbReference>
<dbReference type="InterPro" id="IPR032458">
    <property type="entry name" value="Histone_H2A_CS"/>
</dbReference>
<dbReference type="PANTHER" id="PTHR23430">
    <property type="entry name" value="HISTONE H2A"/>
    <property type="match status" value="1"/>
</dbReference>
<dbReference type="Pfam" id="PF00125">
    <property type="entry name" value="Histone"/>
    <property type="match status" value="1"/>
</dbReference>
<dbReference type="Pfam" id="PF16211">
    <property type="entry name" value="Histone_H2A_C"/>
    <property type="match status" value="1"/>
</dbReference>
<dbReference type="PRINTS" id="PR00620">
    <property type="entry name" value="HISTONEH2A"/>
</dbReference>
<dbReference type="SMART" id="SM00414">
    <property type="entry name" value="H2A"/>
    <property type="match status" value="1"/>
</dbReference>
<dbReference type="SUPFAM" id="SSF47113">
    <property type="entry name" value="Histone-fold"/>
    <property type="match status" value="1"/>
</dbReference>
<dbReference type="PROSITE" id="PS00046">
    <property type="entry name" value="HISTONE_H2A"/>
    <property type="match status" value="1"/>
</dbReference>
<accession>A2Y5G8</accession>
<feature type="chain" id="PRO_0000296122" description="Probable histone H2A.4">
    <location>
        <begin position="1"/>
        <end position="163"/>
    </location>
</feature>
<feature type="region of interest" description="Disordered" evidence="2">
    <location>
        <begin position="1"/>
        <end position="30"/>
    </location>
</feature>
<feature type="region of interest" description="Disordered" evidence="2">
    <location>
        <begin position="134"/>
        <end position="163"/>
    </location>
</feature>
<feature type="short sequence motif" description="SPKK motif 1">
    <location>
        <begin position="148"/>
        <end position="151"/>
    </location>
</feature>
<feature type="short sequence motif" description="SPKK motif 2">
    <location>
        <begin position="156"/>
        <end position="159"/>
    </location>
</feature>
<feature type="compositionally biased region" description="Gly residues" evidence="2">
    <location>
        <begin position="12"/>
        <end position="21"/>
    </location>
</feature>
<feature type="compositionally biased region" description="Basic residues" evidence="2">
    <location>
        <begin position="147"/>
        <end position="163"/>
    </location>
</feature>
<protein>
    <recommendedName>
        <fullName>Probable histone H2A.4</fullName>
    </recommendedName>
</protein>
<reference key="1">
    <citation type="journal article" date="2005" name="PLoS Biol.">
        <title>The genomes of Oryza sativa: a history of duplications.</title>
        <authorList>
            <person name="Yu J."/>
            <person name="Wang J."/>
            <person name="Lin W."/>
            <person name="Li S."/>
            <person name="Li H."/>
            <person name="Zhou J."/>
            <person name="Ni P."/>
            <person name="Dong W."/>
            <person name="Hu S."/>
            <person name="Zeng C."/>
            <person name="Zhang J."/>
            <person name="Zhang Y."/>
            <person name="Li R."/>
            <person name="Xu Z."/>
            <person name="Li S."/>
            <person name="Li X."/>
            <person name="Zheng H."/>
            <person name="Cong L."/>
            <person name="Lin L."/>
            <person name="Yin J."/>
            <person name="Geng J."/>
            <person name="Li G."/>
            <person name="Shi J."/>
            <person name="Liu J."/>
            <person name="Lv H."/>
            <person name="Li J."/>
            <person name="Wang J."/>
            <person name="Deng Y."/>
            <person name="Ran L."/>
            <person name="Shi X."/>
            <person name="Wang X."/>
            <person name="Wu Q."/>
            <person name="Li C."/>
            <person name="Ren X."/>
            <person name="Wang J."/>
            <person name="Wang X."/>
            <person name="Li D."/>
            <person name="Liu D."/>
            <person name="Zhang X."/>
            <person name="Ji Z."/>
            <person name="Zhao W."/>
            <person name="Sun Y."/>
            <person name="Zhang Z."/>
            <person name="Bao J."/>
            <person name="Han Y."/>
            <person name="Dong L."/>
            <person name="Ji J."/>
            <person name="Chen P."/>
            <person name="Wu S."/>
            <person name="Liu J."/>
            <person name="Xiao Y."/>
            <person name="Bu D."/>
            <person name="Tan J."/>
            <person name="Yang L."/>
            <person name="Ye C."/>
            <person name="Zhang J."/>
            <person name="Xu J."/>
            <person name="Zhou Y."/>
            <person name="Yu Y."/>
            <person name="Zhang B."/>
            <person name="Zhuang S."/>
            <person name="Wei H."/>
            <person name="Liu B."/>
            <person name="Lei M."/>
            <person name="Yu H."/>
            <person name="Li Y."/>
            <person name="Xu H."/>
            <person name="Wei S."/>
            <person name="He X."/>
            <person name="Fang L."/>
            <person name="Zhang Z."/>
            <person name="Zhang Y."/>
            <person name="Huang X."/>
            <person name="Su Z."/>
            <person name="Tong W."/>
            <person name="Li J."/>
            <person name="Tong Z."/>
            <person name="Li S."/>
            <person name="Ye J."/>
            <person name="Wang L."/>
            <person name="Fang L."/>
            <person name="Lei T."/>
            <person name="Chen C.-S."/>
            <person name="Chen H.-C."/>
            <person name="Xu Z."/>
            <person name="Li H."/>
            <person name="Huang H."/>
            <person name="Zhang F."/>
            <person name="Xu H."/>
            <person name="Li N."/>
            <person name="Zhao C."/>
            <person name="Li S."/>
            <person name="Dong L."/>
            <person name="Huang Y."/>
            <person name="Li L."/>
            <person name="Xi Y."/>
            <person name="Qi Q."/>
            <person name="Li W."/>
            <person name="Zhang B."/>
            <person name="Hu W."/>
            <person name="Zhang Y."/>
            <person name="Tian X."/>
            <person name="Jiao Y."/>
            <person name="Liang X."/>
            <person name="Jin J."/>
            <person name="Gao L."/>
            <person name="Zheng W."/>
            <person name="Hao B."/>
            <person name="Liu S.-M."/>
            <person name="Wang W."/>
            <person name="Yuan L."/>
            <person name="Cao M."/>
            <person name="McDermott J."/>
            <person name="Samudrala R."/>
            <person name="Wang J."/>
            <person name="Wong G.K.-S."/>
            <person name="Yang H."/>
        </authorList>
    </citation>
    <scope>NUCLEOTIDE SEQUENCE [LARGE SCALE GENOMIC DNA]</scope>
    <source>
        <strain>cv. 93-11</strain>
    </source>
</reference>
<gene>
    <name type="ORF">OsI_019561</name>
</gene>
<keyword id="KW-0158">Chromosome</keyword>
<keyword id="KW-0238">DNA-binding</keyword>
<keyword id="KW-0544">Nucleosome core</keyword>
<keyword id="KW-0539">Nucleus</keyword>
<keyword id="KW-1185">Reference proteome</keyword>